<gene>
    <name evidence="1" type="primary">uvrC</name>
    <name type="ordered locus">EcSMS35_1270</name>
</gene>
<name>UVRC_ECOSM</name>
<accession>B1LQU4</accession>
<protein>
    <recommendedName>
        <fullName evidence="1">UvrABC system protein C</fullName>
        <shortName evidence="1">Protein UvrC</shortName>
    </recommendedName>
    <alternativeName>
        <fullName evidence="1">Excinuclease ABC subunit C</fullName>
    </alternativeName>
</protein>
<dbReference type="EMBL" id="CP000970">
    <property type="protein sequence ID" value="ACB16693.1"/>
    <property type="molecule type" value="Genomic_DNA"/>
</dbReference>
<dbReference type="RefSeq" id="WP_001283415.1">
    <property type="nucleotide sequence ID" value="NC_010498.1"/>
</dbReference>
<dbReference type="SMR" id="B1LQU4"/>
<dbReference type="KEGG" id="ecm:EcSMS35_1270"/>
<dbReference type="HOGENOM" id="CLU_014841_3_0_6"/>
<dbReference type="Proteomes" id="UP000007011">
    <property type="component" value="Chromosome"/>
</dbReference>
<dbReference type="GO" id="GO:0005737">
    <property type="term" value="C:cytoplasm"/>
    <property type="evidence" value="ECO:0007669"/>
    <property type="project" value="UniProtKB-SubCell"/>
</dbReference>
<dbReference type="GO" id="GO:0009380">
    <property type="term" value="C:excinuclease repair complex"/>
    <property type="evidence" value="ECO:0007669"/>
    <property type="project" value="InterPro"/>
</dbReference>
<dbReference type="GO" id="GO:0003677">
    <property type="term" value="F:DNA binding"/>
    <property type="evidence" value="ECO:0007669"/>
    <property type="project" value="UniProtKB-UniRule"/>
</dbReference>
<dbReference type="GO" id="GO:0009381">
    <property type="term" value="F:excinuclease ABC activity"/>
    <property type="evidence" value="ECO:0007669"/>
    <property type="project" value="UniProtKB-UniRule"/>
</dbReference>
<dbReference type="GO" id="GO:0006289">
    <property type="term" value="P:nucleotide-excision repair"/>
    <property type="evidence" value="ECO:0007669"/>
    <property type="project" value="UniProtKB-UniRule"/>
</dbReference>
<dbReference type="GO" id="GO:0009432">
    <property type="term" value="P:SOS response"/>
    <property type="evidence" value="ECO:0007669"/>
    <property type="project" value="UniProtKB-UniRule"/>
</dbReference>
<dbReference type="CDD" id="cd10434">
    <property type="entry name" value="GIY-YIG_UvrC_Cho"/>
    <property type="match status" value="1"/>
</dbReference>
<dbReference type="FunFam" id="1.10.150.20:FF:000005">
    <property type="entry name" value="UvrABC system protein C"/>
    <property type="match status" value="1"/>
</dbReference>
<dbReference type="FunFam" id="3.30.420.340:FF:000001">
    <property type="entry name" value="UvrABC system protein C"/>
    <property type="match status" value="1"/>
</dbReference>
<dbReference type="FunFam" id="3.40.1440.10:FF:000001">
    <property type="entry name" value="UvrABC system protein C"/>
    <property type="match status" value="1"/>
</dbReference>
<dbReference type="FunFam" id="4.10.860.10:FF:000002">
    <property type="entry name" value="UvrABC system protein C"/>
    <property type="match status" value="1"/>
</dbReference>
<dbReference type="Gene3D" id="1.10.150.20">
    <property type="entry name" value="5' to 3' exonuclease, C-terminal subdomain"/>
    <property type="match status" value="1"/>
</dbReference>
<dbReference type="Gene3D" id="3.40.1440.10">
    <property type="entry name" value="GIY-YIG endonuclease"/>
    <property type="match status" value="1"/>
</dbReference>
<dbReference type="Gene3D" id="4.10.860.10">
    <property type="entry name" value="UVR domain"/>
    <property type="match status" value="1"/>
</dbReference>
<dbReference type="Gene3D" id="3.30.420.340">
    <property type="entry name" value="UvrC, RNAse H endonuclease domain"/>
    <property type="match status" value="1"/>
</dbReference>
<dbReference type="HAMAP" id="MF_00203">
    <property type="entry name" value="UvrC"/>
    <property type="match status" value="1"/>
</dbReference>
<dbReference type="InterPro" id="IPR000305">
    <property type="entry name" value="GIY-YIG_endonuc"/>
</dbReference>
<dbReference type="InterPro" id="IPR035901">
    <property type="entry name" value="GIY-YIG_endonuc_sf"/>
</dbReference>
<dbReference type="InterPro" id="IPR047296">
    <property type="entry name" value="GIY-YIG_UvrC_Cho"/>
</dbReference>
<dbReference type="InterPro" id="IPR003583">
    <property type="entry name" value="Hlx-hairpin-Hlx_DNA-bd_motif"/>
</dbReference>
<dbReference type="InterPro" id="IPR010994">
    <property type="entry name" value="RuvA_2-like"/>
</dbReference>
<dbReference type="InterPro" id="IPR001943">
    <property type="entry name" value="UVR_dom"/>
</dbReference>
<dbReference type="InterPro" id="IPR036876">
    <property type="entry name" value="UVR_dom_sf"/>
</dbReference>
<dbReference type="InterPro" id="IPR050066">
    <property type="entry name" value="UvrABC_protein_C"/>
</dbReference>
<dbReference type="InterPro" id="IPR004791">
    <property type="entry name" value="UvrC"/>
</dbReference>
<dbReference type="InterPro" id="IPR001162">
    <property type="entry name" value="UvrC_RNase_H_dom"/>
</dbReference>
<dbReference type="InterPro" id="IPR038476">
    <property type="entry name" value="UvrC_RNase_H_dom_sf"/>
</dbReference>
<dbReference type="NCBIfam" id="NF001824">
    <property type="entry name" value="PRK00558.1-5"/>
    <property type="match status" value="1"/>
</dbReference>
<dbReference type="NCBIfam" id="TIGR00194">
    <property type="entry name" value="uvrC"/>
    <property type="match status" value="1"/>
</dbReference>
<dbReference type="PANTHER" id="PTHR30562:SF1">
    <property type="entry name" value="UVRABC SYSTEM PROTEIN C"/>
    <property type="match status" value="1"/>
</dbReference>
<dbReference type="PANTHER" id="PTHR30562">
    <property type="entry name" value="UVRC/OXIDOREDUCTASE"/>
    <property type="match status" value="1"/>
</dbReference>
<dbReference type="Pfam" id="PF01541">
    <property type="entry name" value="GIY-YIG"/>
    <property type="match status" value="1"/>
</dbReference>
<dbReference type="Pfam" id="PF14520">
    <property type="entry name" value="HHH_5"/>
    <property type="match status" value="1"/>
</dbReference>
<dbReference type="Pfam" id="PF02151">
    <property type="entry name" value="UVR"/>
    <property type="match status" value="1"/>
</dbReference>
<dbReference type="Pfam" id="PF22920">
    <property type="entry name" value="UvrC_RNaseH"/>
    <property type="match status" value="1"/>
</dbReference>
<dbReference type="Pfam" id="PF08459">
    <property type="entry name" value="UvrC_RNaseH_dom"/>
    <property type="match status" value="1"/>
</dbReference>
<dbReference type="SMART" id="SM00465">
    <property type="entry name" value="GIYc"/>
    <property type="match status" value="1"/>
</dbReference>
<dbReference type="SMART" id="SM00278">
    <property type="entry name" value="HhH1"/>
    <property type="match status" value="2"/>
</dbReference>
<dbReference type="SUPFAM" id="SSF46600">
    <property type="entry name" value="C-terminal UvrC-binding domain of UvrB"/>
    <property type="match status" value="1"/>
</dbReference>
<dbReference type="SUPFAM" id="SSF82771">
    <property type="entry name" value="GIY-YIG endonuclease"/>
    <property type="match status" value="1"/>
</dbReference>
<dbReference type="SUPFAM" id="SSF47781">
    <property type="entry name" value="RuvA domain 2-like"/>
    <property type="match status" value="1"/>
</dbReference>
<dbReference type="PROSITE" id="PS50164">
    <property type="entry name" value="GIY_YIG"/>
    <property type="match status" value="1"/>
</dbReference>
<dbReference type="PROSITE" id="PS50151">
    <property type="entry name" value="UVR"/>
    <property type="match status" value="1"/>
</dbReference>
<dbReference type="PROSITE" id="PS50165">
    <property type="entry name" value="UVRC"/>
    <property type="match status" value="1"/>
</dbReference>
<comment type="function">
    <text evidence="1">The UvrABC repair system catalyzes the recognition and processing of DNA lesions. UvrC both incises the 5' and 3' sides of the lesion. The N-terminal half is responsible for the 3' incision and the C-terminal half is responsible for the 5' incision.</text>
</comment>
<comment type="subunit">
    <text evidence="1">Interacts with UvrB in an incision complex.</text>
</comment>
<comment type="subcellular location">
    <subcellularLocation>
        <location evidence="1">Cytoplasm</location>
    </subcellularLocation>
</comment>
<comment type="similarity">
    <text evidence="1">Belongs to the UvrC family.</text>
</comment>
<feature type="chain" id="PRO_1000200582" description="UvrABC system protein C">
    <location>
        <begin position="1"/>
        <end position="610"/>
    </location>
</feature>
<feature type="domain" description="GIY-YIG" evidence="1">
    <location>
        <begin position="16"/>
        <end position="94"/>
    </location>
</feature>
<feature type="domain" description="UVR" evidence="1">
    <location>
        <begin position="204"/>
        <end position="239"/>
    </location>
</feature>
<proteinExistence type="inferred from homology"/>
<sequence>MSDQFDAKAFLKTVTSQPGVYRMYDAGGTVIYVGKAKDLKKRLSSYFRSNLASRKTEALVAQIQQIDVTVTHTETEALLLEHNYIKLYQPRYNVLLRDDKSYPFIFLSGDTHPRLAMHRGAKHAKGEYFGPFPNGYAVRETLALLQKIFPIRQCENSVYRNRSRPCLQYQIGRCLGPCVEGLVSEEEYAQQVEYVRLFLSGKDDQVLTQLISRMETASQNLEFEEAARIRDQIQAVRRVTEKQFVSNTGDDLDVIGVAFDAGMACVHVLFIRQGKVLGSRSYFPKVPGGTELSEVVETFVGQFYLQGSQMRTLPGEILLDFNLSDKTLLADSLSELAGRKINVQTKPRGDRARYLKLARTNAATALTSKLSQQSTVHQRLTALASVLKLPEVKRMECFDISHTMGEQTVASCVVFDANGPLRAEYRRYNITGIRPGDDYAAMNQVLRRRYGKAIDDSKIPDVILIDGGKGQLAQAKNVFAELDVSWDKNHPLLLGVAKGADRKAGLETLFFEPEGEGFSLPPDSPALHVIQHIRDESHDHAIGGHRKKRAKVKNTSSLETIEGVGPKRRQMLLKYMGGLQGLRNASVEEIAKVPGISQGLAEKIFWSLKH</sequence>
<reference key="1">
    <citation type="journal article" date="2008" name="J. Bacteriol.">
        <title>Insights into the environmental resistance gene pool from the genome sequence of the multidrug-resistant environmental isolate Escherichia coli SMS-3-5.</title>
        <authorList>
            <person name="Fricke W.F."/>
            <person name="Wright M.S."/>
            <person name="Lindell A.H."/>
            <person name="Harkins D.M."/>
            <person name="Baker-Austin C."/>
            <person name="Ravel J."/>
            <person name="Stepanauskas R."/>
        </authorList>
    </citation>
    <scope>NUCLEOTIDE SEQUENCE [LARGE SCALE GENOMIC DNA]</scope>
    <source>
        <strain>SMS-3-5 / SECEC</strain>
    </source>
</reference>
<organism>
    <name type="scientific">Escherichia coli (strain SMS-3-5 / SECEC)</name>
    <dbReference type="NCBI Taxonomy" id="439855"/>
    <lineage>
        <taxon>Bacteria</taxon>
        <taxon>Pseudomonadati</taxon>
        <taxon>Pseudomonadota</taxon>
        <taxon>Gammaproteobacteria</taxon>
        <taxon>Enterobacterales</taxon>
        <taxon>Enterobacteriaceae</taxon>
        <taxon>Escherichia</taxon>
    </lineage>
</organism>
<keyword id="KW-0963">Cytoplasm</keyword>
<keyword id="KW-0227">DNA damage</keyword>
<keyword id="KW-0228">DNA excision</keyword>
<keyword id="KW-0234">DNA repair</keyword>
<keyword id="KW-0267">Excision nuclease</keyword>
<keyword id="KW-0742">SOS response</keyword>
<evidence type="ECO:0000255" key="1">
    <source>
        <dbReference type="HAMAP-Rule" id="MF_00203"/>
    </source>
</evidence>